<proteinExistence type="evidence at protein level"/>
<feature type="chain" id="PRO_0000066713" description="Alpha-insect toxin BotIT1">
    <location>
        <begin position="1"/>
        <end position="65"/>
    </location>
</feature>
<feature type="domain" description="LCN-type CS-alpha/beta" evidence="1">
    <location>
        <begin position="2"/>
        <end position="64"/>
    </location>
</feature>
<feature type="disulfide bond" evidence="1">
    <location>
        <begin position="12"/>
        <end position="63"/>
    </location>
</feature>
<feature type="disulfide bond" evidence="1">
    <location>
        <begin position="16"/>
        <end position="36"/>
    </location>
</feature>
<feature type="disulfide bond" evidence="1">
    <location>
        <begin position="22"/>
        <end position="46"/>
    </location>
</feature>
<feature type="disulfide bond" evidence="1">
    <location>
        <begin position="26"/>
        <end position="48"/>
    </location>
</feature>
<comment type="function">
    <text>Alpha toxins bind voltage-independently at site-3 of sodium channels (Nav) and inhibit the inactivation of the activated channels, thereby blocking neuronal transmission. This contractive toxin is highly toxic to insects and barely toxic to mammals.</text>
</comment>
<comment type="subcellular location">
    <subcellularLocation>
        <location>Secreted</location>
    </subcellularLocation>
</comment>
<comment type="tissue specificity">
    <text>Expressed by the venom gland.</text>
</comment>
<comment type="domain">
    <text evidence="3">Has the structural arrangement of an alpha-helix connected to antiparallel beta-sheets by disulfide bonds (CS-alpha/beta).</text>
</comment>
<comment type="mass spectrometry" mass="7334.93" error="0.23" method="Electrospray" evidence="2"/>
<comment type="toxic dose">
    <text evidence="2">LD(50) is 50 ug/kg in mouse by intracerebroventricular injection and 600 ng/g in Blattella germanica.</text>
</comment>
<comment type="similarity">
    <text evidence="3">Belongs to the long (4 C-C) scorpion toxin superfamily. Sodium channel inhibitor family. Alpha subfamily.</text>
</comment>
<organism>
    <name type="scientific">Buthus occitanus tunetanus</name>
    <name type="common">Common European scorpion</name>
    <name type="synonym">Buthus tunetanus</name>
    <dbReference type="NCBI Taxonomy" id="6871"/>
    <lineage>
        <taxon>Eukaryota</taxon>
        <taxon>Metazoa</taxon>
        <taxon>Ecdysozoa</taxon>
        <taxon>Arthropoda</taxon>
        <taxon>Chelicerata</taxon>
        <taxon>Arachnida</taxon>
        <taxon>Scorpiones</taxon>
        <taxon>Buthida</taxon>
        <taxon>Buthoidea</taxon>
        <taxon>Buthidae</taxon>
        <taxon>Buthus</taxon>
    </lineage>
</organism>
<accession>P55902</accession>
<name>SIX1_BUTOC</name>
<dbReference type="SMR" id="P55902"/>
<dbReference type="GO" id="GO:0005576">
    <property type="term" value="C:extracellular region"/>
    <property type="evidence" value="ECO:0007669"/>
    <property type="project" value="UniProtKB-SubCell"/>
</dbReference>
<dbReference type="GO" id="GO:0019871">
    <property type="term" value="F:sodium channel inhibitor activity"/>
    <property type="evidence" value="ECO:0007669"/>
    <property type="project" value="InterPro"/>
</dbReference>
<dbReference type="GO" id="GO:0090729">
    <property type="term" value="F:toxin activity"/>
    <property type="evidence" value="ECO:0007669"/>
    <property type="project" value="UniProtKB-KW"/>
</dbReference>
<dbReference type="GO" id="GO:0006952">
    <property type="term" value="P:defense response"/>
    <property type="evidence" value="ECO:0007669"/>
    <property type="project" value="InterPro"/>
</dbReference>
<dbReference type="CDD" id="cd23106">
    <property type="entry name" value="neurotoxins_LC_scorpion"/>
    <property type="match status" value="1"/>
</dbReference>
<dbReference type="FunFam" id="3.30.30.10:FF:000002">
    <property type="entry name" value="Alpha-like toxin BmK-M1"/>
    <property type="match status" value="1"/>
</dbReference>
<dbReference type="Gene3D" id="3.30.30.10">
    <property type="entry name" value="Knottin, scorpion toxin-like"/>
    <property type="match status" value="1"/>
</dbReference>
<dbReference type="InterPro" id="IPR044062">
    <property type="entry name" value="LCN-type_CS_alpha_beta_dom"/>
</dbReference>
<dbReference type="InterPro" id="IPR003614">
    <property type="entry name" value="Scorpion_toxin-like"/>
</dbReference>
<dbReference type="InterPro" id="IPR036574">
    <property type="entry name" value="Scorpion_toxin-like_sf"/>
</dbReference>
<dbReference type="InterPro" id="IPR018218">
    <property type="entry name" value="Scorpion_toxinL"/>
</dbReference>
<dbReference type="InterPro" id="IPR002061">
    <property type="entry name" value="Scorpion_toxinL/defensin"/>
</dbReference>
<dbReference type="Pfam" id="PF00537">
    <property type="entry name" value="Toxin_3"/>
    <property type="match status" value="1"/>
</dbReference>
<dbReference type="PRINTS" id="PR00285">
    <property type="entry name" value="SCORPNTOXIN"/>
</dbReference>
<dbReference type="SMART" id="SM00505">
    <property type="entry name" value="Knot1"/>
    <property type="match status" value="1"/>
</dbReference>
<dbReference type="SUPFAM" id="SSF57095">
    <property type="entry name" value="Scorpion toxin-like"/>
    <property type="match status" value="1"/>
</dbReference>
<dbReference type="PROSITE" id="PS51863">
    <property type="entry name" value="LCN_CSAB"/>
    <property type="match status" value="1"/>
</dbReference>
<protein>
    <recommendedName>
        <fullName>Alpha-insect toxin BotIT1</fullName>
    </recommendedName>
</protein>
<sequence length="65" mass="7343">VRDAYIAQNYNCVYFCMKDDYCNDLCTKNGASSGYCQWAGKYGNACWCYALPDNVPIRIPGKCHS</sequence>
<keyword id="KW-0903">Direct protein sequencing</keyword>
<keyword id="KW-1015">Disulfide bond</keyword>
<keyword id="KW-0872">Ion channel impairing toxin</keyword>
<keyword id="KW-0528">Neurotoxin</keyword>
<keyword id="KW-0964">Secreted</keyword>
<keyword id="KW-0800">Toxin</keyword>
<keyword id="KW-0738">Voltage-gated sodium channel impairing toxin</keyword>
<evidence type="ECO:0000255" key="1">
    <source>
        <dbReference type="PROSITE-ProRule" id="PRU01210"/>
    </source>
</evidence>
<evidence type="ECO:0000269" key="2">
    <source>
    </source>
</evidence>
<evidence type="ECO:0000305" key="3"/>
<reference key="1">
    <citation type="journal article" date="1997" name="Toxicon">
        <title>Purification, structure and activity of three insect toxins from Buthus occitanus tunetanus venom.</title>
        <authorList>
            <person name="Borchani L."/>
            <person name="Stankiewicz M."/>
            <person name="Kopeyan C."/>
            <person name="Mansuelle P."/>
            <person name="Kharrat R."/>
            <person name="Cestele S."/>
            <person name="Karoui H."/>
            <person name="Rochat H."/>
            <person name="Pelhate M."/>
            <person name="el Ayeb M."/>
        </authorList>
    </citation>
    <scope>PROTEIN SEQUENCE</scope>
    <scope>TOXIC DOSE</scope>
    <scope>MASS SPECTROMETRY</scope>
    <source>
        <tissue>Venom</tissue>
    </source>
</reference>